<organism>
    <name type="scientific">Mus musculus</name>
    <name type="common">Mouse</name>
    <dbReference type="NCBI Taxonomy" id="10090"/>
    <lineage>
        <taxon>Eukaryota</taxon>
        <taxon>Metazoa</taxon>
        <taxon>Chordata</taxon>
        <taxon>Craniata</taxon>
        <taxon>Vertebrata</taxon>
        <taxon>Euteleostomi</taxon>
        <taxon>Mammalia</taxon>
        <taxon>Eutheria</taxon>
        <taxon>Euarchontoglires</taxon>
        <taxon>Glires</taxon>
        <taxon>Rodentia</taxon>
        <taxon>Myomorpha</taxon>
        <taxon>Muroidea</taxon>
        <taxon>Muridae</taxon>
        <taxon>Murinae</taxon>
        <taxon>Mus</taxon>
        <taxon>Mus</taxon>
    </lineage>
</organism>
<name>RAB24_MOUSE</name>
<feature type="chain" id="PRO_0000121214" description="Ras-related protein Rab-24">
    <location>
        <begin position="1"/>
        <end position="203"/>
    </location>
</feature>
<feature type="region of interest" description="Switch I" evidence="3">
    <location>
        <begin position="30"/>
        <end position="45"/>
    </location>
</feature>
<feature type="region of interest" description="Switch II" evidence="3">
    <location>
        <begin position="63"/>
        <end position="80"/>
    </location>
</feature>
<feature type="binding site" evidence="1">
    <location>
        <position position="19"/>
    </location>
    <ligand>
        <name>GTP</name>
        <dbReference type="ChEBI" id="CHEBI:37565"/>
    </ligand>
</feature>
<feature type="binding site" evidence="1">
    <location>
        <position position="20"/>
    </location>
    <ligand>
        <name>GTP</name>
        <dbReference type="ChEBI" id="CHEBI:37565"/>
    </ligand>
</feature>
<feature type="binding site" evidence="1">
    <location>
        <position position="21"/>
    </location>
    <ligand>
        <name>GTP</name>
        <dbReference type="ChEBI" id="CHEBI:37565"/>
    </ligand>
</feature>
<feature type="binding site" evidence="1">
    <location>
        <position position="21"/>
    </location>
    <ligand>
        <name>Mg(2+)</name>
        <dbReference type="ChEBI" id="CHEBI:18420"/>
    </ligand>
</feature>
<feature type="binding site" evidence="1">
    <location>
        <position position="40"/>
    </location>
    <ligand>
        <name>GTP</name>
        <dbReference type="ChEBI" id="CHEBI:37565"/>
    </ligand>
</feature>
<feature type="binding site" evidence="1">
    <location>
        <position position="40"/>
    </location>
    <ligand>
        <name>Mg(2+)</name>
        <dbReference type="ChEBI" id="CHEBI:18420"/>
    </ligand>
</feature>
<feature type="binding site" evidence="1">
    <location>
        <position position="63"/>
    </location>
    <ligand>
        <name>Mg(2+)</name>
        <dbReference type="ChEBI" id="CHEBI:18420"/>
    </ligand>
</feature>
<feature type="binding site" evidence="1">
    <location>
        <position position="66"/>
    </location>
    <ligand>
        <name>GTP</name>
        <dbReference type="ChEBI" id="CHEBI:37565"/>
    </ligand>
</feature>
<feature type="binding site" evidence="1">
    <location>
        <position position="121"/>
    </location>
    <ligand>
        <name>GTP</name>
        <dbReference type="ChEBI" id="CHEBI:37565"/>
    </ligand>
</feature>
<feature type="binding site" evidence="1">
    <location>
        <position position="123"/>
    </location>
    <ligand>
        <name>GTP</name>
        <dbReference type="ChEBI" id="CHEBI:37565"/>
    </ligand>
</feature>
<feature type="binding site" evidence="1">
    <location>
        <position position="156"/>
    </location>
    <ligand>
        <name>GTP</name>
        <dbReference type="ChEBI" id="CHEBI:37565"/>
    </ligand>
</feature>
<feature type="modified residue" description="Phosphotyrosine" evidence="6">
    <location>
        <position position="17"/>
    </location>
</feature>
<feature type="modified residue" description="Phosphotyrosine" evidence="6">
    <location>
        <position position="172"/>
    </location>
</feature>
<feature type="lipid moiety-binding region" description="S-geranylgeranyl cysteine" evidence="1">
    <location>
        <position position="200"/>
    </location>
</feature>
<feature type="lipid moiety-binding region" description="S-geranylgeranyl cysteine" evidence="1">
    <location>
        <position position="201"/>
    </location>
</feature>
<feature type="mutagenesis site" description="No change in autophagosome targeting under fed condition. Decreased autophagosome targeting under starved condition." evidence="7">
    <original>Y</original>
    <variation>F</variation>
    <location>
        <position position="17"/>
    </location>
</feature>
<feature type="mutagenesis site" description="Predominantly in the GTP-bound state. No effect on subcellular location." evidence="5">
    <original>S</original>
    <variation>N</variation>
    <location>
        <position position="22"/>
    </location>
</feature>
<feature type="mutagenesis site" description="Increased GTPase activity. Decreased autophagosome targeting under fed and starved conditions." evidence="7">
    <original>S</original>
    <variation>L</variation>
    <location>
        <position position="67"/>
    </location>
</feature>
<feature type="mutagenesis site" description="Increase in GTPase activity. No effect neither on prenylation, nor on subcellular location." evidence="4">
    <original>S</original>
    <variation>Q</variation>
    <location>
        <position position="67"/>
    </location>
</feature>
<feature type="mutagenesis site" description="Accumulates in punctate structures in both cytoplasmic and nuclear compartments." evidence="5">
    <original>T</original>
    <variation>A</variation>
    <variation>I</variation>
    <location>
        <position position="120"/>
    </location>
</feature>
<feature type="mutagenesis site" description="Accumulates in punctate structures in both cytoplasmic and nuclear compartments. Disrupts the integrity of the nuclear envelope." evidence="5">
    <original>D</original>
    <variation>I</variation>
    <location>
        <position position="123"/>
    </location>
</feature>
<feature type="mutagenesis site" description="No change in autophagosome targeting under fed condition. Decreased autophagosome targeting under starved condition." evidence="7">
    <original>Y</original>
    <variation>F</variation>
    <location>
        <position position="172"/>
    </location>
</feature>
<feature type="mutagenesis site" description="Loss of prenylation. Loss of autophagosome targeting under fed condition. Decreased autophagosome targeting under starved condition." evidence="7">
    <original>CC</original>
    <variation>SS</variation>
    <location>
        <begin position="200"/>
        <end position="201"/>
    </location>
</feature>
<feature type="mutagenesis site" description="Loss of prenylation. Loss of autophagosome targeting under fed condition. Decreased autophagosome targeting under starved condition." evidence="7">
    <location>
        <begin position="200"/>
        <end position="201"/>
    </location>
</feature>
<feature type="mutagenesis site" description="Slight increased prenylation. No effect on subcellular location." evidence="7">
    <original>HH</original>
    <variation>SN</variation>
    <location>
        <begin position="202"/>
        <end position="203"/>
    </location>
</feature>
<feature type="mutagenesis site" description="Slight increased prenylation. No effect on subcellular location." evidence="7">
    <location>
        <begin position="202"/>
        <end position="203"/>
    </location>
</feature>
<feature type="sequence conflict" description="In Ref. 3; AAK14830." evidence="10" ref="3">
    <original>S</original>
    <variation>Q</variation>
    <location>
        <position position="67"/>
    </location>
</feature>
<comment type="function">
    <text evidence="4 7 8">The small GTPases Rab are key regulators of intracellular membrane trafficking, from the formation of transport vesicles to their fusion with membranes (PubMed:26325487, PubMed:31496367). Rabs cycle between an inactive GDP-bound form and an active GTP-bound form that is able to recruit to membranes different sets of downstream effectors directly responsible for vesicle formation, movement, tethering and fusion (PubMed:10660536, PubMed:26325487, PubMed:31496367). RAB24 is an atypical RAB protein that presents low GTPase activity and thereby exists predominantly in the GTP-bound active state (PubMed:10660536). RAB24 is required for the clearance of late autophagic vacuoles under basal conditions (PubMed:26325487). It is not needed for starvation-induced autophagy (PubMed:26325487). Involved in the modulation of meiotic apparatus assembly and meiotic progression during oocyte maturation, possibly through regulation of kinetochore-microtubule interaction (PubMed:31496367).</text>
</comment>
<comment type="catalytic activity">
    <reaction evidence="4">
        <text>GTP + H2O = GDP + phosphate + H(+)</text>
        <dbReference type="Rhea" id="RHEA:19669"/>
        <dbReference type="ChEBI" id="CHEBI:15377"/>
        <dbReference type="ChEBI" id="CHEBI:15378"/>
        <dbReference type="ChEBI" id="CHEBI:37565"/>
        <dbReference type="ChEBI" id="CHEBI:43474"/>
        <dbReference type="ChEBI" id="CHEBI:58189"/>
        <dbReference type="EC" id="3.6.5.2"/>
    </reaction>
    <physiologicalReaction direction="left-to-right" evidence="11">
        <dbReference type="Rhea" id="RHEA:19670"/>
    </physiologicalReaction>
</comment>
<comment type="cofactor">
    <cofactor evidence="1">
        <name>Mg(2+)</name>
        <dbReference type="ChEBI" id="CHEBI:18420"/>
    </cofactor>
</comment>
<comment type="activity regulation">
    <text evidence="10">Regulated by guanine nucleotide exchange factors (GEFs) which promote the exchange of bound GDP for free GTP (Probable). Regulated by GTPase activating proteins (GAPs) which increase the GTP hydrolysis activity (Probable). Inhibited by GDP dissociation inhibitors (GDIs) (Probable).</text>
</comment>
<comment type="subunit">
    <text evidence="2">Interacts with ZFYVE20 (By similarity). Does not interact with the GDP dissociation inhibitors ARHGDIA and ARHGDIB (By similarity).</text>
</comment>
<comment type="subcellular location">
    <subcellularLocation>
        <location evidence="4 5 8">Cytoplasm</location>
        <location evidence="4 5 8">Cytosol</location>
    </subcellularLocation>
    <subcellularLocation>
        <location evidence="4 5">Membrane</location>
        <topology evidence="10">Lipid-anchor</topology>
    </subcellularLocation>
    <subcellularLocation>
        <location evidence="7">Cytoplasmic vesicle</location>
        <location evidence="7">Autophagosome membrane</location>
    </subcellularLocation>
    <subcellularLocation>
        <location evidence="7 8">Cytoplasm</location>
        <location evidence="7 8">Perinuclear region</location>
    </subcellularLocation>
    <subcellularLocation>
        <location evidence="8">Cytoplasm</location>
        <location evidence="8">Cytoskeleton</location>
        <location evidence="8">Spindle</location>
    </subcellularLocation>
    <text evidence="4 7 8">Only about 20% is recovered in the particulate fraction (PubMed:10660536). RAB24 localizes in perinuclear region and in the limiting membranes of autophagic compartments under basal conditions (PubMed:26325487). RAB24 is localized in the cytoplasm with an accumulated distribution in nuclear region at germinal vesicle (GV) stage of oocyte meiotic progression. At pre-metaphase I stage, localized in the cytoplasm with a particular concentration around chromosomes. As the oocytes enter metaphase I, located to the spindle region. Similar distribution pattern is observed in MII oocytes (PubMed:31496367).</text>
</comment>
<comment type="tissue specificity">
    <text evidence="9">Widely expressed, with highest expression in brain.</text>
</comment>
<comment type="domain">
    <text evidence="1">Switch I, switch II and the interswitch regions are characteristic of Rab GTPases and mediate the interactions with Rab downstream effectors. The switch regions undergo conformational changes upon nucleotide binding which drive interaction with specific sets of effector proteins, with most effectors only binding to GTP-bound Rab.</text>
</comment>
<comment type="PTM">
    <text evidence="4 7">Prenylated; prenylation is required for RAB24 localization to autophagosomes (PubMed:26325487). Isoprenylation is inefficient compared to other Rab family members (PubMed:10660536).</text>
</comment>
<comment type="PTM">
    <text evidence="6">Phosphorylated at Tyr-17 and Tyr-172 (PubMed:14680817). Cytosolic pool of RAB24 is more phosphorylated than the membrane-associated pool (PubMed:14680817).</text>
</comment>
<comment type="miscellaneous">
    <text evidence="4">The unusual Ser-67, instead of a conserved Gln in other family members, is the cause of low GTPase activity. As a result, the predominant nucleotide associated with the protein is GTP.</text>
</comment>
<comment type="similarity">
    <text evidence="10">Belongs to the small GTPase superfamily. Rab family.</text>
</comment>
<proteinExistence type="evidence at protein level"/>
<protein>
    <recommendedName>
        <fullName>Ras-related protein Rab-24</fullName>
        <ecNumber evidence="4">3.6.5.2</ecNumber>
    </recommendedName>
    <alternativeName>
        <fullName>Rab-16</fullName>
    </alternativeName>
</protein>
<accession>P35290</accession>
<gene>
    <name evidence="12" type="primary">Rab24</name>
</gene>
<sequence>MSGQRVDVKVVMLGKEYVGKTSLVERYVHDRFLVGPYQNTIGAAFVAKVMCVGDRTVTLGIWDTAGSERYEAMSRIYYRGAKAAIVCYDLTDSSSFERAKFWVKELRSLEEGCQIYLCGTKSDLLEEDRRRRRVDFHDVQDYADNIKAQLFETSSKTGQSVDELFQKVAEDYVSVAAFQVMTEDKGVDLSQKANPYFYSCCHH</sequence>
<evidence type="ECO:0000250" key="1">
    <source>
        <dbReference type="UniProtKB" id="P62820"/>
    </source>
</evidence>
<evidence type="ECO:0000250" key="2">
    <source>
        <dbReference type="UniProtKB" id="Q969Q5"/>
    </source>
</evidence>
<evidence type="ECO:0000255" key="3">
    <source>
        <dbReference type="PROSITE-ProRule" id="PRU00753"/>
    </source>
</evidence>
<evidence type="ECO:0000269" key="4">
    <source>
    </source>
</evidence>
<evidence type="ECO:0000269" key="5">
    <source>
    </source>
</evidence>
<evidence type="ECO:0000269" key="6">
    <source>
    </source>
</evidence>
<evidence type="ECO:0000269" key="7">
    <source>
    </source>
</evidence>
<evidence type="ECO:0000269" key="8">
    <source>
    </source>
</evidence>
<evidence type="ECO:0000269" key="9">
    <source>
    </source>
</evidence>
<evidence type="ECO:0000305" key="10"/>
<evidence type="ECO:0000305" key="11">
    <source>
    </source>
</evidence>
<evidence type="ECO:0000312" key="12">
    <source>
        <dbReference type="MGI" id="MGI:105065"/>
    </source>
</evidence>
<reference key="1">
    <citation type="journal article" date="1993" name="J. Cell Sci.">
        <title>Molecular cloning and subcellular localization of three GTP-binding proteins of the rab subfamily.</title>
        <authorList>
            <person name="Olkkonen V.M."/>
            <person name="Dupree P."/>
            <person name="Killisch I."/>
            <person name="Luetcke A."/>
            <person name="Simons K."/>
            <person name="Zerial M."/>
        </authorList>
    </citation>
    <scope>NUCLEOTIDE SEQUENCE [MRNA]</scope>
    <scope>TISSUE SPECIFICITY</scope>
    <source>
        <tissue>Liver</tissue>
    </source>
</reference>
<reference key="2">
    <citation type="journal article" date="2004" name="Genome Res.">
        <title>The status, quality, and expansion of the NIH full-length cDNA project: the Mammalian Gene Collection (MGC).</title>
        <authorList>
            <consortium name="The MGC Project Team"/>
        </authorList>
    </citation>
    <scope>NUCLEOTIDE SEQUENCE [LARGE SCALE MRNA]</scope>
    <source>
        <strain>FVB/N</strain>
        <tissue>Colon</tissue>
        <tissue>Mammary gland</tissue>
    </source>
</reference>
<reference key="3">
    <citation type="journal article" date="1992" name="Gene">
        <title>The complexity of the Rab and Rho GTP-binding protein subfamilies revealed by a PCR cloning approach.</title>
        <authorList>
            <person name="Chavrier P."/>
            <person name="Simons K."/>
            <person name="Zerial M."/>
        </authorList>
    </citation>
    <scope>NUCLEOTIDE SEQUENCE [MRNA] OF 1-68</scope>
    <source>
        <tissue>Kidney</tissue>
    </source>
</reference>
<reference key="4">
    <citation type="journal article" date="2000" name="J. Biol. Chem.">
        <title>Rab24 is an atypical member of the Rab GTPase family. Deficient GTPase activity, GDP dissociation inhibitor interaction, and prenylation of Rab24 expressed in cultured cells.</title>
        <authorList>
            <person name="Erdman R.A."/>
            <person name="Shellenberger K.E."/>
            <person name="Overmeyer J.H."/>
            <person name="Maltese W.A."/>
        </authorList>
    </citation>
    <scope>FUNCTION</scope>
    <scope>CATALYTIC ACTIVITY</scope>
    <scope>SUBCELLULAR LOCATION</scope>
    <scope>ISOPRENYLATION</scope>
    <scope>LACK OF INTERACTION WITH ARHGDIA AND ARHGDIB</scope>
    <scope>MUTAGENESIS OF SER-67</scope>
</reference>
<reference key="5">
    <citation type="journal article" date="2002" name="BMC Cell Biol.">
        <title>Mutant Rab24 GTPase is targeted to nuclear inclusions.</title>
        <authorList>
            <person name="Maltese W.A."/>
            <person name="Soule G."/>
            <person name="Gunning W."/>
            <person name="Calomeni E."/>
            <person name="Alexander B."/>
        </authorList>
    </citation>
    <scope>SUBCELLULAR LOCATION</scope>
    <scope>MUTAGENESIS OF SER-22; THR-120 AND ASP-123</scope>
</reference>
<reference key="6">
    <citation type="journal article" date="2003" name="Biochem. Biophys. Res. Commun.">
        <title>Tyrosine phosphorylation of the Rab24 GTPase in cultured mammalian cells.</title>
        <authorList>
            <person name="Ding J."/>
            <person name="Soule G."/>
            <person name="Overmeyer J.H."/>
            <person name="Maltese W.A."/>
        </authorList>
    </citation>
    <scope>PHOSPHORYLATION AT TYR-17 AND TYR-172</scope>
</reference>
<reference key="7">
    <citation type="journal article" date="2010" name="Cell">
        <title>A tissue-specific atlas of mouse protein phosphorylation and expression.</title>
        <authorList>
            <person name="Huttlin E.L."/>
            <person name="Jedrychowski M.P."/>
            <person name="Elias J.E."/>
            <person name="Goswami T."/>
            <person name="Rad R."/>
            <person name="Beausoleil S.A."/>
            <person name="Villen J."/>
            <person name="Haas W."/>
            <person name="Sowa M.E."/>
            <person name="Gygi S.P."/>
        </authorList>
    </citation>
    <scope>IDENTIFICATION BY MASS SPECTROMETRY [LARGE SCALE ANALYSIS]</scope>
    <source>
        <tissue>Brain</tissue>
        <tissue>Brown adipose tissue</tissue>
        <tissue>Heart</tissue>
        <tissue>Kidney</tissue>
        <tissue>Liver</tissue>
        <tissue>Lung</tissue>
        <tissue>Pancreas</tissue>
        <tissue>Spleen</tissue>
        <tissue>Testis</tissue>
    </source>
</reference>
<reference key="8">
    <citation type="journal article" date="2015" name="Autophagy">
        <title>RAB24 facilitates clearance of autophagic compartments during basal conditions.</title>
        <authorList>
            <person name="Ylae-Anttila P."/>
            <person name="Mikkonen E."/>
            <person name="Happonen K.E."/>
            <person name="Holland P."/>
            <person name="Ueno T."/>
            <person name="Simonsen A."/>
            <person name="Eskelinen E.L."/>
        </authorList>
    </citation>
    <scope>FUNCTION</scope>
    <scope>SUBCELLULAR LOCATION</scope>
    <scope>PRENYLATION</scope>
    <scope>MUTAGENESIS OF TYR-17; SER-67; TYR-172; 200-CYS-CYS-201 AND 202-HIS-HIS-203</scope>
</reference>
<reference key="9">
    <citation type="journal article" date="2019" name="Cell Cycle">
        <title>Rab24 functions in meiotic apparatus assembly and maturational progression in mouse oocyte.</title>
        <authorList>
            <person name="Qiu D."/>
            <person name="Li S."/>
            <person name="Guo L."/>
            <person name="Yuan R."/>
            <person name="Ou X."/>
        </authorList>
    </citation>
    <scope>FUNCTION</scope>
    <scope>SUBCELLULAR LOCATION</scope>
</reference>
<keyword id="KW-0072">Autophagy</keyword>
<keyword id="KW-0963">Cytoplasm</keyword>
<keyword id="KW-0968">Cytoplasmic vesicle</keyword>
<keyword id="KW-0206">Cytoskeleton</keyword>
<keyword id="KW-0342">GTP-binding</keyword>
<keyword id="KW-0378">Hydrolase</keyword>
<keyword id="KW-0449">Lipoprotein</keyword>
<keyword id="KW-0460">Magnesium</keyword>
<keyword id="KW-0472">Membrane</keyword>
<keyword id="KW-0479">Metal-binding</keyword>
<keyword id="KW-0547">Nucleotide-binding</keyword>
<keyword id="KW-0597">Phosphoprotein</keyword>
<keyword id="KW-0636">Prenylation</keyword>
<keyword id="KW-0653">Protein transport</keyword>
<keyword id="KW-1185">Reference proteome</keyword>
<keyword id="KW-0813">Transport</keyword>
<dbReference type="EC" id="3.6.5.2" evidence="4"/>
<dbReference type="EMBL" id="Z22819">
    <property type="protein sequence ID" value="CAA80472.1"/>
    <property type="molecule type" value="mRNA"/>
</dbReference>
<dbReference type="EMBL" id="BC019950">
    <property type="protein sequence ID" value="AAH19950.1"/>
    <property type="molecule type" value="mRNA"/>
</dbReference>
<dbReference type="EMBL" id="BC054466">
    <property type="protein sequence ID" value="AAH54466.1"/>
    <property type="molecule type" value="mRNA"/>
</dbReference>
<dbReference type="EMBL" id="BC055894">
    <property type="protein sequence ID" value="AAH55894.1"/>
    <property type="molecule type" value="mRNA"/>
</dbReference>
<dbReference type="EMBL" id="M79306">
    <property type="protein sequence ID" value="AAK14830.1"/>
    <property type="molecule type" value="mRNA"/>
</dbReference>
<dbReference type="CCDS" id="CCDS26541.1"/>
<dbReference type="PIR" id="JH0646">
    <property type="entry name" value="JH0646"/>
</dbReference>
<dbReference type="PIR" id="S40235">
    <property type="entry name" value="S40235"/>
</dbReference>
<dbReference type="RefSeq" id="NP_033026.1">
    <property type="nucleotide sequence ID" value="NM_009000.4"/>
</dbReference>
<dbReference type="SMR" id="P35290"/>
<dbReference type="BioGRID" id="202541">
    <property type="interactions" value="1"/>
</dbReference>
<dbReference type="FunCoup" id="P35290">
    <property type="interactions" value="2266"/>
</dbReference>
<dbReference type="IntAct" id="P35290">
    <property type="interactions" value="4"/>
</dbReference>
<dbReference type="MINT" id="P35290"/>
<dbReference type="STRING" id="10090.ENSMUSP00000046188"/>
<dbReference type="iPTMnet" id="P35290"/>
<dbReference type="PhosphoSitePlus" id="P35290"/>
<dbReference type="jPOST" id="P35290"/>
<dbReference type="PaxDb" id="10090-ENSMUSP00000046188"/>
<dbReference type="PeptideAtlas" id="P35290"/>
<dbReference type="ProteomicsDB" id="300342"/>
<dbReference type="Pumba" id="P35290"/>
<dbReference type="Antibodypedia" id="29222">
    <property type="antibodies" value="282 antibodies from 25 providers"/>
</dbReference>
<dbReference type="DNASU" id="19336"/>
<dbReference type="Ensembl" id="ENSMUST00000035242.9">
    <property type="protein sequence ID" value="ENSMUSP00000046188.8"/>
    <property type="gene ID" value="ENSMUSG00000034789.9"/>
</dbReference>
<dbReference type="GeneID" id="19336"/>
<dbReference type="KEGG" id="mmu:19336"/>
<dbReference type="UCSC" id="uc007qqk.1">
    <property type="organism name" value="mouse"/>
</dbReference>
<dbReference type="AGR" id="MGI:105065"/>
<dbReference type="CTD" id="53917"/>
<dbReference type="MGI" id="MGI:105065">
    <property type="gene designation" value="Rab24"/>
</dbReference>
<dbReference type="VEuPathDB" id="HostDB:ENSMUSG00000034789"/>
<dbReference type="eggNOG" id="KOG0092">
    <property type="taxonomic scope" value="Eukaryota"/>
</dbReference>
<dbReference type="GeneTree" id="ENSGT00910000144316"/>
<dbReference type="HOGENOM" id="CLU_041217_10_2_1"/>
<dbReference type="InParanoid" id="P35290"/>
<dbReference type="OMA" id="RFRAGPY"/>
<dbReference type="OrthoDB" id="25896at2759"/>
<dbReference type="PhylomeDB" id="P35290"/>
<dbReference type="TreeFam" id="TF300199"/>
<dbReference type="Reactome" id="R-MMU-6798695">
    <property type="pathway name" value="Neutrophil degranulation"/>
</dbReference>
<dbReference type="Reactome" id="R-MMU-8873719">
    <property type="pathway name" value="RAB geranylgeranylation"/>
</dbReference>
<dbReference type="BioGRID-ORCS" id="19336">
    <property type="hits" value="3 hits in 78 CRISPR screens"/>
</dbReference>
<dbReference type="ChiTaRS" id="Rab24">
    <property type="organism name" value="mouse"/>
</dbReference>
<dbReference type="PRO" id="PR:P35290"/>
<dbReference type="Proteomes" id="UP000000589">
    <property type="component" value="Chromosome 13"/>
</dbReference>
<dbReference type="RNAct" id="P35290">
    <property type="molecule type" value="protein"/>
</dbReference>
<dbReference type="Bgee" id="ENSMUSG00000034789">
    <property type="expression patterns" value="Expressed in granulocyte and 271 other cell types or tissues"/>
</dbReference>
<dbReference type="ExpressionAtlas" id="P35290">
    <property type="expression patterns" value="baseline and differential"/>
</dbReference>
<dbReference type="GO" id="GO:0005776">
    <property type="term" value="C:autophagosome"/>
    <property type="evidence" value="ECO:0000314"/>
    <property type="project" value="MGI"/>
</dbReference>
<dbReference type="GO" id="GO:0000421">
    <property type="term" value="C:autophagosome membrane"/>
    <property type="evidence" value="ECO:0000314"/>
    <property type="project" value="UniProtKB"/>
</dbReference>
<dbReference type="GO" id="GO:0005737">
    <property type="term" value="C:cytoplasm"/>
    <property type="evidence" value="ECO:0000314"/>
    <property type="project" value="UniProtKB"/>
</dbReference>
<dbReference type="GO" id="GO:0005829">
    <property type="term" value="C:cytosol"/>
    <property type="evidence" value="ECO:0007669"/>
    <property type="project" value="UniProtKB-SubCell"/>
</dbReference>
<dbReference type="GO" id="GO:0005739">
    <property type="term" value="C:mitochondrion"/>
    <property type="evidence" value="ECO:0007005"/>
    <property type="project" value="MGI"/>
</dbReference>
<dbReference type="GO" id="GO:0048471">
    <property type="term" value="C:perinuclear region of cytoplasm"/>
    <property type="evidence" value="ECO:0000314"/>
    <property type="project" value="UniProtKB"/>
</dbReference>
<dbReference type="GO" id="GO:0005819">
    <property type="term" value="C:spindle"/>
    <property type="evidence" value="ECO:0000314"/>
    <property type="project" value="UniProtKB"/>
</dbReference>
<dbReference type="GO" id="GO:0003925">
    <property type="term" value="F:G protein activity"/>
    <property type="evidence" value="ECO:0000314"/>
    <property type="project" value="UniProtKB"/>
</dbReference>
<dbReference type="GO" id="GO:0005525">
    <property type="term" value="F:GTP binding"/>
    <property type="evidence" value="ECO:0007669"/>
    <property type="project" value="UniProtKB-KW"/>
</dbReference>
<dbReference type="GO" id="GO:0008608">
    <property type="term" value="P:attachment of spindle microtubules to kinetochore"/>
    <property type="evidence" value="ECO:0000315"/>
    <property type="project" value="UniProtKB"/>
</dbReference>
<dbReference type="GO" id="GO:0006914">
    <property type="term" value="P:autophagy"/>
    <property type="evidence" value="ECO:0000315"/>
    <property type="project" value="UniProtKB"/>
</dbReference>
<dbReference type="GO" id="GO:0140013">
    <property type="term" value="P:meiotic nuclear division"/>
    <property type="evidence" value="ECO:0000315"/>
    <property type="project" value="UniProtKB"/>
</dbReference>
<dbReference type="GO" id="GO:0001556">
    <property type="term" value="P:oocyte maturation"/>
    <property type="evidence" value="ECO:0000315"/>
    <property type="project" value="UniProtKB"/>
</dbReference>
<dbReference type="GO" id="GO:0015031">
    <property type="term" value="P:protein transport"/>
    <property type="evidence" value="ECO:0007669"/>
    <property type="project" value="UniProtKB-KW"/>
</dbReference>
<dbReference type="CDD" id="cd04118">
    <property type="entry name" value="Rab24"/>
    <property type="match status" value="1"/>
</dbReference>
<dbReference type="FunFam" id="3.40.50.300:FF:000799">
    <property type="entry name" value="ras-related protein Rab-24 isoform X1"/>
    <property type="match status" value="1"/>
</dbReference>
<dbReference type="Gene3D" id="3.40.50.300">
    <property type="entry name" value="P-loop containing nucleotide triphosphate hydrolases"/>
    <property type="match status" value="1"/>
</dbReference>
<dbReference type="InterPro" id="IPR027417">
    <property type="entry name" value="P-loop_NTPase"/>
</dbReference>
<dbReference type="InterPro" id="IPR041828">
    <property type="entry name" value="Rab24"/>
</dbReference>
<dbReference type="InterPro" id="IPR005225">
    <property type="entry name" value="Small_GTP-bd"/>
</dbReference>
<dbReference type="InterPro" id="IPR001806">
    <property type="entry name" value="Small_GTPase"/>
</dbReference>
<dbReference type="NCBIfam" id="TIGR00231">
    <property type="entry name" value="small_GTP"/>
    <property type="match status" value="1"/>
</dbReference>
<dbReference type="PANTHER" id="PTHR47978">
    <property type="match status" value="1"/>
</dbReference>
<dbReference type="Pfam" id="PF00071">
    <property type="entry name" value="Ras"/>
    <property type="match status" value="1"/>
</dbReference>
<dbReference type="PRINTS" id="PR00449">
    <property type="entry name" value="RASTRNSFRMNG"/>
</dbReference>
<dbReference type="SMART" id="SM00175">
    <property type="entry name" value="RAB"/>
    <property type="match status" value="1"/>
</dbReference>
<dbReference type="SMART" id="SM00176">
    <property type="entry name" value="RAN"/>
    <property type="match status" value="1"/>
</dbReference>
<dbReference type="SMART" id="SM00173">
    <property type="entry name" value="RAS"/>
    <property type="match status" value="1"/>
</dbReference>
<dbReference type="SMART" id="SM00174">
    <property type="entry name" value="RHO"/>
    <property type="match status" value="1"/>
</dbReference>
<dbReference type="SUPFAM" id="SSF52540">
    <property type="entry name" value="P-loop containing nucleoside triphosphate hydrolases"/>
    <property type="match status" value="1"/>
</dbReference>
<dbReference type="PROSITE" id="PS51419">
    <property type="entry name" value="RAB"/>
    <property type="match status" value="1"/>
</dbReference>